<evidence type="ECO:0000255" key="1">
    <source>
        <dbReference type="HAMAP-Rule" id="MF_00038"/>
    </source>
</evidence>
<gene>
    <name evidence="1" type="primary">mraY</name>
    <name type="ordered locus">BARBAKC583_0950</name>
</gene>
<accession>A1UTC8</accession>
<name>MRAY_BARBK</name>
<protein>
    <recommendedName>
        <fullName evidence="1">Phospho-N-acetylmuramoyl-pentapeptide-transferase</fullName>
        <ecNumber evidence="1">2.7.8.13</ecNumber>
    </recommendedName>
    <alternativeName>
        <fullName evidence="1">UDP-MurNAc-pentapeptide phosphotransferase</fullName>
    </alternativeName>
</protein>
<feature type="chain" id="PRO_1000002938" description="Phospho-N-acetylmuramoyl-pentapeptide-transferase">
    <location>
        <begin position="1"/>
        <end position="356"/>
    </location>
</feature>
<feature type="transmembrane region" description="Helical" evidence="1">
    <location>
        <begin position="25"/>
        <end position="45"/>
    </location>
</feature>
<feature type="transmembrane region" description="Helical" evidence="1">
    <location>
        <begin position="70"/>
        <end position="90"/>
    </location>
</feature>
<feature type="transmembrane region" description="Helical" evidence="1">
    <location>
        <begin position="93"/>
        <end position="113"/>
    </location>
</feature>
<feature type="transmembrane region" description="Helical" evidence="1">
    <location>
        <begin position="138"/>
        <end position="158"/>
    </location>
</feature>
<feature type="transmembrane region" description="Helical" evidence="1">
    <location>
        <begin position="164"/>
        <end position="184"/>
    </location>
</feature>
<feature type="transmembrane region" description="Helical" evidence="1">
    <location>
        <begin position="195"/>
        <end position="215"/>
    </location>
</feature>
<feature type="transmembrane region" description="Helical" evidence="1">
    <location>
        <begin position="232"/>
        <end position="252"/>
    </location>
</feature>
<feature type="transmembrane region" description="Helical" evidence="1">
    <location>
        <begin position="258"/>
        <end position="278"/>
    </location>
</feature>
<feature type="transmembrane region" description="Helical" evidence="1">
    <location>
        <begin position="284"/>
        <end position="304"/>
    </location>
</feature>
<feature type="transmembrane region" description="Helical" evidence="1">
    <location>
        <begin position="333"/>
        <end position="353"/>
    </location>
</feature>
<keyword id="KW-0131">Cell cycle</keyword>
<keyword id="KW-0132">Cell division</keyword>
<keyword id="KW-0997">Cell inner membrane</keyword>
<keyword id="KW-1003">Cell membrane</keyword>
<keyword id="KW-0133">Cell shape</keyword>
<keyword id="KW-0961">Cell wall biogenesis/degradation</keyword>
<keyword id="KW-0460">Magnesium</keyword>
<keyword id="KW-0472">Membrane</keyword>
<keyword id="KW-0479">Metal-binding</keyword>
<keyword id="KW-0573">Peptidoglycan synthesis</keyword>
<keyword id="KW-0808">Transferase</keyword>
<keyword id="KW-0812">Transmembrane</keyword>
<keyword id="KW-1133">Transmembrane helix</keyword>
<sequence length="356" mass="38721">MMLFFSSLYDWLPGVNVFRYITFRTVAAMLTSGLIVFLFGPSIISSLKVRQGKGQPIRADGPQTHFKKAGTPTMGGLMILSGVVISALLWGNLFNIYLWVSLFVMLFFGAIGFYDDYLKVTKQTDKGFSGKARLSLEFLVASIASFIILQVGSPGLALPFVKEYFINLGWFFIPFSACVVVGLGNAVNLTDGLDGLAIVPVMVASLSFALIAYLSGNINFADYLQIHYVSGVGELAVLLGAVFGAGLGFLWFNAPPAAIFMGDTGSLALGGLLGIVSVATKHEIVLIFIGGLFVLETLSVIIQVGWFKLTKKRVFLMAPIHHHFEKKGWTESQIVVRFWIIAIVLALIGLSTLKLR</sequence>
<dbReference type="EC" id="2.7.8.13" evidence="1"/>
<dbReference type="EMBL" id="CP000524">
    <property type="protein sequence ID" value="ABM44543.1"/>
    <property type="molecule type" value="Genomic_DNA"/>
</dbReference>
<dbReference type="RefSeq" id="WP_005767435.1">
    <property type="nucleotide sequence ID" value="NC_008783.1"/>
</dbReference>
<dbReference type="SMR" id="A1UTC8"/>
<dbReference type="STRING" id="360095.BARBAKC583_0950"/>
<dbReference type="GeneID" id="4684086"/>
<dbReference type="KEGG" id="bbk:BARBAKC583_0950"/>
<dbReference type="PATRIC" id="fig|360095.6.peg.921"/>
<dbReference type="eggNOG" id="COG0472">
    <property type="taxonomic scope" value="Bacteria"/>
</dbReference>
<dbReference type="HOGENOM" id="CLU_023982_0_0_5"/>
<dbReference type="OrthoDB" id="9805475at2"/>
<dbReference type="UniPathway" id="UPA00219"/>
<dbReference type="Proteomes" id="UP000000643">
    <property type="component" value="Chromosome"/>
</dbReference>
<dbReference type="GO" id="GO:0005886">
    <property type="term" value="C:plasma membrane"/>
    <property type="evidence" value="ECO:0007669"/>
    <property type="project" value="UniProtKB-SubCell"/>
</dbReference>
<dbReference type="GO" id="GO:0046872">
    <property type="term" value="F:metal ion binding"/>
    <property type="evidence" value="ECO:0007669"/>
    <property type="project" value="UniProtKB-KW"/>
</dbReference>
<dbReference type="GO" id="GO:0008963">
    <property type="term" value="F:phospho-N-acetylmuramoyl-pentapeptide-transferase activity"/>
    <property type="evidence" value="ECO:0007669"/>
    <property type="project" value="UniProtKB-UniRule"/>
</dbReference>
<dbReference type="GO" id="GO:0051992">
    <property type="term" value="F:UDP-N-acetylmuramoyl-L-alanyl-D-glutamyl-meso-2,6-diaminopimelyl-D-alanyl-D-alanine:undecaprenyl-phosphate transferase activity"/>
    <property type="evidence" value="ECO:0007669"/>
    <property type="project" value="RHEA"/>
</dbReference>
<dbReference type="GO" id="GO:0051301">
    <property type="term" value="P:cell division"/>
    <property type="evidence" value="ECO:0007669"/>
    <property type="project" value="UniProtKB-KW"/>
</dbReference>
<dbReference type="GO" id="GO:0071555">
    <property type="term" value="P:cell wall organization"/>
    <property type="evidence" value="ECO:0007669"/>
    <property type="project" value="UniProtKB-KW"/>
</dbReference>
<dbReference type="GO" id="GO:0009252">
    <property type="term" value="P:peptidoglycan biosynthetic process"/>
    <property type="evidence" value="ECO:0007669"/>
    <property type="project" value="UniProtKB-UniRule"/>
</dbReference>
<dbReference type="GO" id="GO:0008360">
    <property type="term" value="P:regulation of cell shape"/>
    <property type="evidence" value="ECO:0007669"/>
    <property type="project" value="UniProtKB-KW"/>
</dbReference>
<dbReference type="CDD" id="cd06852">
    <property type="entry name" value="GT_MraY"/>
    <property type="match status" value="1"/>
</dbReference>
<dbReference type="HAMAP" id="MF_00038">
    <property type="entry name" value="MraY"/>
    <property type="match status" value="1"/>
</dbReference>
<dbReference type="InterPro" id="IPR000715">
    <property type="entry name" value="Glycosyl_transferase_4"/>
</dbReference>
<dbReference type="InterPro" id="IPR003524">
    <property type="entry name" value="PNAcMuramoyl-5peptid_Trfase"/>
</dbReference>
<dbReference type="InterPro" id="IPR018480">
    <property type="entry name" value="PNAcMuramoyl-5peptid_Trfase_CS"/>
</dbReference>
<dbReference type="NCBIfam" id="TIGR00445">
    <property type="entry name" value="mraY"/>
    <property type="match status" value="1"/>
</dbReference>
<dbReference type="PANTHER" id="PTHR22926">
    <property type="entry name" value="PHOSPHO-N-ACETYLMURAMOYL-PENTAPEPTIDE-TRANSFERASE"/>
    <property type="match status" value="1"/>
</dbReference>
<dbReference type="PANTHER" id="PTHR22926:SF5">
    <property type="entry name" value="PHOSPHO-N-ACETYLMURAMOYL-PENTAPEPTIDE-TRANSFERASE HOMOLOG"/>
    <property type="match status" value="1"/>
</dbReference>
<dbReference type="Pfam" id="PF00953">
    <property type="entry name" value="Glycos_transf_4"/>
    <property type="match status" value="1"/>
</dbReference>
<dbReference type="Pfam" id="PF10555">
    <property type="entry name" value="MraY_sig1"/>
    <property type="match status" value="1"/>
</dbReference>
<dbReference type="PROSITE" id="PS01347">
    <property type="entry name" value="MRAY_1"/>
    <property type="match status" value="1"/>
</dbReference>
<dbReference type="PROSITE" id="PS01348">
    <property type="entry name" value="MRAY_2"/>
    <property type="match status" value="1"/>
</dbReference>
<organism>
    <name type="scientific">Bartonella bacilliformis (strain ATCC 35685 / KC583 / Herrer 020/F12,63)</name>
    <dbReference type="NCBI Taxonomy" id="360095"/>
    <lineage>
        <taxon>Bacteria</taxon>
        <taxon>Pseudomonadati</taxon>
        <taxon>Pseudomonadota</taxon>
        <taxon>Alphaproteobacteria</taxon>
        <taxon>Hyphomicrobiales</taxon>
        <taxon>Bartonellaceae</taxon>
        <taxon>Bartonella</taxon>
    </lineage>
</organism>
<comment type="function">
    <text evidence="1">Catalyzes the initial step of the lipid cycle reactions in the biosynthesis of the cell wall peptidoglycan: transfers peptidoglycan precursor phospho-MurNAc-pentapeptide from UDP-MurNAc-pentapeptide onto the lipid carrier undecaprenyl phosphate, yielding undecaprenyl-pyrophosphoryl-MurNAc-pentapeptide, known as lipid I.</text>
</comment>
<comment type="catalytic activity">
    <reaction evidence="1">
        <text>UDP-N-acetyl-alpha-D-muramoyl-L-alanyl-gamma-D-glutamyl-meso-2,6-diaminopimeloyl-D-alanyl-D-alanine + di-trans,octa-cis-undecaprenyl phosphate = di-trans,octa-cis-undecaprenyl diphospho-N-acetyl-alpha-D-muramoyl-L-alanyl-D-glutamyl-meso-2,6-diaminopimeloyl-D-alanyl-D-alanine + UMP</text>
        <dbReference type="Rhea" id="RHEA:28386"/>
        <dbReference type="ChEBI" id="CHEBI:57865"/>
        <dbReference type="ChEBI" id="CHEBI:60392"/>
        <dbReference type="ChEBI" id="CHEBI:61386"/>
        <dbReference type="ChEBI" id="CHEBI:61387"/>
        <dbReference type="EC" id="2.7.8.13"/>
    </reaction>
</comment>
<comment type="cofactor">
    <cofactor evidence="1">
        <name>Mg(2+)</name>
        <dbReference type="ChEBI" id="CHEBI:18420"/>
    </cofactor>
</comment>
<comment type="pathway">
    <text evidence="1">Cell wall biogenesis; peptidoglycan biosynthesis.</text>
</comment>
<comment type="subcellular location">
    <subcellularLocation>
        <location evidence="1">Cell inner membrane</location>
        <topology evidence="1">Multi-pass membrane protein</topology>
    </subcellularLocation>
</comment>
<comment type="similarity">
    <text evidence="1">Belongs to the glycosyltransferase 4 family. MraY subfamily.</text>
</comment>
<proteinExistence type="inferred from homology"/>
<reference key="1">
    <citation type="submission" date="2006-12" db="EMBL/GenBank/DDBJ databases">
        <authorList>
            <person name="Hendrix L."/>
            <person name="Mohamoud Y."/>
            <person name="Radune D."/>
            <person name="Shvartsbeyn A."/>
            <person name="Daugherty S."/>
            <person name="Dodson R."/>
            <person name="Durkin A.S."/>
            <person name="Harkins D."/>
            <person name="Huot H."/>
            <person name="Kothari S.P."/>
            <person name="Madupu R."/>
            <person name="Li J."/>
            <person name="Nelson W.C."/>
            <person name="Shrivastava S."/>
            <person name="Giglio M.G."/>
            <person name="Haft D."/>
            <person name="Selengut J."/>
            <person name="Fraser-Ligget C."/>
            <person name="Seshadri R."/>
        </authorList>
    </citation>
    <scope>NUCLEOTIDE SEQUENCE [LARGE SCALE GENOMIC DNA]</scope>
    <source>
        <strain>ATCC 35685 / KC583 / Herrer 020/F12,63</strain>
    </source>
</reference>